<keyword id="KW-0010">Activator</keyword>
<keyword id="KW-0963">Cytoplasm</keyword>
<keyword id="KW-0238">DNA-binding</keyword>
<keyword id="KW-0479">Metal-binding</keyword>
<keyword id="KW-0678">Repressor</keyword>
<keyword id="KW-0804">Transcription</keyword>
<keyword id="KW-0805">Transcription regulation</keyword>
<keyword id="KW-0843">Virulence</keyword>
<accession>Q6GBL2</accession>
<comment type="function">
    <text evidence="1">Global regulator with both positive and negative effects that controls the expression of several virulence factors and the biofilm formation process in a cell density-dependent manner.</text>
</comment>
<comment type="subunit">
    <text evidence="1">Homodimer.</text>
</comment>
<comment type="subcellular location">
    <subcellularLocation>
        <location evidence="1">Cytoplasm</location>
    </subcellularLocation>
</comment>
<comment type="similarity">
    <text evidence="2">Belongs to the SarA family.</text>
</comment>
<reference key="1">
    <citation type="journal article" date="2004" name="Proc. Natl. Acad. Sci. U.S.A.">
        <title>Complete genomes of two clinical Staphylococcus aureus strains: evidence for the rapid evolution of virulence and drug resistance.</title>
        <authorList>
            <person name="Holden M.T.G."/>
            <person name="Feil E.J."/>
            <person name="Lindsay J.A."/>
            <person name="Peacock S.J."/>
            <person name="Day N.P.J."/>
            <person name="Enright M.C."/>
            <person name="Foster T.J."/>
            <person name="Moore C.E."/>
            <person name="Hurst L."/>
            <person name="Atkin R."/>
            <person name="Barron A."/>
            <person name="Bason N."/>
            <person name="Bentley S.D."/>
            <person name="Chillingworth C."/>
            <person name="Chillingworth T."/>
            <person name="Churcher C."/>
            <person name="Clark L."/>
            <person name="Corton C."/>
            <person name="Cronin A."/>
            <person name="Doggett J."/>
            <person name="Dowd L."/>
            <person name="Feltwell T."/>
            <person name="Hance Z."/>
            <person name="Harris B."/>
            <person name="Hauser H."/>
            <person name="Holroyd S."/>
            <person name="Jagels K."/>
            <person name="James K.D."/>
            <person name="Lennard N."/>
            <person name="Line A."/>
            <person name="Mayes R."/>
            <person name="Moule S."/>
            <person name="Mungall K."/>
            <person name="Ormond D."/>
            <person name="Quail M.A."/>
            <person name="Rabbinowitsch E."/>
            <person name="Rutherford K.M."/>
            <person name="Sanders M."/>
            <person name="Sharp S."/>
            <person name="Simmonds M."/>
            <person name="Stevens K."/>
            <person name="Whitehead S."/>
            <person name="Barrell B.G."/>
            <person name="Spratt B.G."/>
            <person name="Parkhill J."/>
        </authorList>
    </citation>
    <scope>NUCLEOTIDE SEQUENCE [LARGE SCALE GENOMIC DNA]</scope>
    <source>
        <strain>MSSA476</strain>
    </source>
</reference>
<feature type="initiator methionine" description="Removed" evidence="1">
    <location>
        <position position="1"/>
    </location>
</feature>
<feature type="chain" id="PRO_0000219581" description="Transcriptional regulator SarA">
    <location>
        <begin position="2"/>
        <end position="124"/>
    </location>
</feature>
<feature type="binding site" evidence="1">
    <location>
        <position position="7"/>
    </location>
    <ligand>
        <name>a divalent metal cation</name>
        <dbReference type="ChEBI" id="CHEBI:60240"/>
    </ligand>
</feature>
<feature type="binding site" evidence="1">
    <location>
        <position position="8"/>
    </location>
    <ligand>
        <name>a divalent metal cation</name>
        <dbReference type="ChEBI" id="CHEBI:60240"/>
    </ligand>
</feature>
<feature type="binding site" evidence="1">
    <location>
        <position position="11"/>
    </location>
    <ligand>
        <name>a divalent metal cation</name>
        <dbReference type="ChEBI" id="CHEBI:60240"/>
    </ligand>
</feature>
<sequence>MAITKINDCFELLSMVTYADKLKSLIKKEFSISFEEFAVLTYISENKEKEYYLKDIINHLNYKQPQVVKAVKILSQEDYFDKKRNEHDERTVLILVNAQQRKKIESLLSRVNKRITEANNEIEL</sequence>
<proteinExistence type="inferred from homology"/>
<name>SARA_STAAS</name>
<dbReference type="EMBL" id="BX571857">
    <property type="protein sequence ID" value="CAG42359.1"/>
    <property type="molecule type" value="Genomic_DNA"/>
</dbReference>
<dbReference type="RefSeq" id="WP_001018677.1">
    <property type="nucleotide sequence ID" value="NC_002953.3"/>
</dbReference>
<dbReference type="SMR" id="Q6GBL2"/>
<dbReference type="KEGG" id="sas:SAS0584"/>
<dbReference type="HOGENOM" id="CLU_164084_0_0_9"/>
<dbReference type="PRO" id="PR:Q6GBL2"/>
<dbReference type="GO" id="GO:0005737">
    <property type="term" value="C:cytoplasm"/>
    <property type="evidence" value="ECO:0007669"/>
    <property type="project" value="UniProtKB-SubCell"/>
</dbReference>
<dbReference type="GO" id="GO:0003677">
    <property type="term" value="F:DNA binding"/>
    <property type="evidence" value="ECO:0007669"/>
    <property type="project" value="UniProtKB-KW"/>
</dbReference>
<dbReference type="GO" id="GO:0003700">
    <property type="term" value="F:DNA-binding transcription factor activity"/>
    <property type="evidence" value="ECO:0007669"/>
    <property type="project" value="InterPro"/>
</dbReference>
<dbReference type="GO" id="GO:0046872">
    <property type="term" value="F:metal ion binding"/>
    <property type="evidence" value="ECO:0007669"/>
    <property type="project" value="UniProtKB-KW"/>
</dbReference>
<dbReference type="GO" id="GO:0006950">
    <property type="term" value="P:response to stress"/>
    <property type="evidence" value="ECO:0007669"/>
    <property type="project" value="TreeGrafter"/>
</dbReference>
<dbReference type="FunFam" id="1.10.10.10:FF:000541">
    <property type="entry name" value="Transcriptional regulator SarA"/>
    <property type="match status" value="1"/>
</dbReference>
<dbReference type="Gene3D" id="1.10.10.10">
    <property type="entry name" value="Winged helix-like DNA-binding domain superfamily/Winged helix DNA-binding domain"/>
    <property type="match status" value="1"/>
</dbReference>
<dbReference type="InterPro" id="IPR039422">
    <property type="entry name" value="MarR/SlyA-like"/>
</dbReference>
<dbReference type="InterPro" id="IPR010166">
    <property type="entry name" value="SarA/Rot_dom"/>
</dbReference>
<dbReference type="InterPro" id="IPR055166">
    <property type="entry name" value="Transc_reg_Sar_Rot_HTH"/>
</dbReference>
<dbReference type="InterPro" id="IPR036388">
    <property type="entry name" value="WH-like_DNA-bd_sf"/>
</dbReference>
<dbReference type="InterPro" id="IPR036390">
    <property type="entry name" value="WH_DNA-bd_sf"/>
</dbReference>
<dbReference type="NCBIfam" id="TIGR01889">
    <property type="entry name" value="Staph_reg_Sar"/>
    <property type="match status" value="1"/>
</dbReference>
<dbReference type="NCBIfam" id="NF038268">
    <property type="entry name" value="TF_SarA"/>
    <property type="match status" value="1"/>
</dbReference>
<dbReference type="PANTHER" id="PTHR33164:SF5">
    <property type="entry name" value="ORGANIC HYDROPEROXIDE RESISTANCE TRANSCRIPTIONAL REGULATOR"/>
    <property type="match status" value="1"/>
</dbReference>
<dbReference type="PANTHER" id="PTHR33164">
    <property type="entry name" value="TRANSCRIPTIONAL REGULATOR, MARR FAMILY"/>
    <property type="match status" value="1"/>
</dbReference>
<dbReference type="Pfam" id="PF22381">
    <property type="entry name" value="Staph_reg_Sar_Rot"/>
    <property type="match status" value="1"/>
</dbReference>
<dbReference type="SUPFAM" id="SSF46785">
    <property type="entry name" value="Winged helix' DNA-binding domain"/>
    <property type="match status" value="1"/>
</dbReference>
<evidence type="ECO:0000250" key="1"/>
<evidence type="ECO:0000305" key="2"/>
<gene>
    <name type="primary">sarA</name>
    <name type="ordered locus">SAS0584</name>
</gene>
<organism>
    <name type="scientific">Staphylococcus aureus (strain MSSA476)</name>
    <dbReference type="NCBI Taxonomy" id="282459"/>
    <lineage>
        <taxon>Bacteria</taxon>
        <taxon>Bacillati</taxon>
        <taxon>Bacillota</taxon>
        <taxon>Bacilli</taxon>
        <taxon>Bacillales</taxon>
        <taxon>Staphylococcaceae</taxon>
        <taxon>Staphylococcus</taxon>
    </lineage>
</organism>
<protein>
    <recommendedName>
        <fullName>Transcriptional regulator SarA</fullName>
    </recommendedName>
    <alternativeName>
        <fullName>Staphylococcal accessory regulator A</fullName>
    </alternativeName>
</protein>